<evidence type="ECO:0000256" key="1">
    <source>
        <dbReference type="SAM" id="MobiDB-lite"/>
    </source>
</evidence>
<evidence type="ECO:0000305" key="2"/>
<evidence type="ECO:0007829" key="3">
    <source>
        <dbReference type="PDB" id="4D8M"/>
    </source>
</evidence>
<accession>Q45712</accession>
<proteinExistence type="evidence at protein level"/>
<name>CR5BA_BACTU</name>
<dbReference type="EMBL" id="U19725">
    <property type="protein sequence ID" value="AAA68598.1"/>
    <property type="molecule type" value="Genomic_DNA"/>
</dbReference>
<dbReference type="PIR" id="T18211">
    <property type="entry name" value="T18211"/>
</dbReference>
<dbReference type="PDB" id="4D8M">
    <property type="method" value="X-ray"/>
    <property type="resolution" value="2.30 A"/>
    <property type="chains" value="A=112-698"/>
</dbReference>
<dbReference type="PDBsum" id="4D8M"/>
<dbReference type="SMR" id="Q45712"/>
<dbReference type="EvolutionaryTrace" id="Q45712"/>
<dbReference type="GO" id="GO:0090729">
    <property type="term" value="F:toxin activity"/>
    <property type="evidence" value="ECO:0000314"/>
    <property type="project" value="UniProtKB"/>
</dbReference>
<dbReference type="GO" id="GO:0030435">
    <property type="term" value="P:sporulation resulting in formation of a cellular spore"/>
    <property type="evidence" value="ECO:0007669"/>
    <property type="project" value="UniProtKB-KW"/>
</dbReference>
<dbReference type="GO" id="GO:0001907">
    <property type="term" value="P:symbiont-mediated killing of host cell"/>
    <property type="evidence" value="ECO:0007669"/>
    <property type="project" value="InterPro"/>
</dbReference>
<dbReference type="CDD" id="cd04085">
    <property type="entry name" value="delta_endotoxin_C"/>
    <property type="match status" value="1"/>
</dbReference>
<dbReference type="Gene3D" id="2.100.10.40">
    <property type="match status" value="1"/>
</dbReference>
<dbReference type="Gene3D" id="2.60.120.260">
    <property type="entry name" value="Galactose-binding domain-like"/>
    <property type="match status" value="2"/>
</dbReference>
<dbReference type="Gene3D" id="1.20.190.10">
    <property type="entry name" value="Pesticidal crystal protein, N-terminal domain"/>
    <property type="match status" value="1"/>
</dbReference>
<dbReference type="InterPro" id="IPR041587">
    <property type="entry name" value="Cry_V"/>
</dbReference>
<dbReference type="InterPro" id="IPR008979">
    <property type="entry name" value="Galactose-bd-like_sf"/>
</dbReference>
<dbReference type="InterPro" id="IPR038979">
    <property type="entry name" value="Pest_crys"/>
</dbReference>
<dbReference type="InterPro" id="IPR005638">
    <property type="entry name" value="Pest_crys_dom-III"/>
</dbReference>
<dbReference type="InterPro" id="IPR005639">
    <property type="entry name" value="Pest_crys_dom_I"/>
</dbReference>
<dbReference type="InterPro" id="IPR036716">
    <property type="entry name" value="Pest_crys_N_sf"/>
</dbReference>
<dbReference type="PANTHER" id="PTHR37003">
    <property type="entry name" value="ENDOTOXIN_N DOMAIN-CONTAINING PROTEIN-RELATED"/>
    <property type="match status" value="1"/>
</dbReference>
<dbReference type="PANTHER" id="PTHR37003:SF2">
    <property type="entry name" value="PESTICIDAL CRYSTAL PROTEIN N-TERMINAL DOMAIN-CONTAINING PROTEIN"/>
    <property type="match status" value="1"/>
</dbReference>
<dbReference type="Pfam" id="PF17997">
    <property type="entry name" value="Cry1Ac_D5"/>
    <property type="match status" value="1"/>
</dbReference>
<dbReference type="Pfam" id="PF03944">
    <property type="entry name" value="Endotoxin_C"/>
    <property type="match status" value="1"/>
</dbReference>
<dbReference type="Pfam" id="PF03945">
    <property type="entry name" value="Endotoxin_N"/>
    <property type="match status" value="1"/>
</dbReference>
<dbReference type="SUPFAM" id="SSF56849">
    <property type="entry name" value="delta-Endotoxin (insectocide), N-terminal domain"/>
    <property type="match status" value="1"/>
</dbReference>
<dbReference type="SUPFAM" id="SSF49785">
    <property type="entry name" value="Galactose-binding domain-like"/>
    <property type="match status" value="1"/>
</dbReference>
<feature type="chain" id="PRO_0000174069" description="Pesticidal crystal protein Cry5Ba">
    <location>
        <begin position="1"/>
        <end position="1245"/>
    </location>
</feature>
<feature type="region of interest" description="Disordered" evidence="1">
    <location>
        <begin position="1219"/>
        <end position="1245"/>
    </location>
</feature>
<feature type="compositionally biased region" description="Low complexity" evidence="1">
    <location>
        <begin position="1222"/>
        <end position="1245"/>
    </location>
</feature>
<feature type="helix" evidence="3">
    <location>
        <begin position="115"/>
        <end position="161"/>
    </location>
</feature>
<feature type="turn" evidence="3">
    <location>
        <begin position="175"/>
        <end position="177"/>
    </location>
</feature>
<feature type="helix" evidence="3">
    <location>
        <begin position="187"/>
        <end position="207"/>
    </location>
</feature>
<feature type="helix" evidence="3">
    <location>
        <begin position="208"/>
        <end position="211"/>
    </location>
</feature>
<feature type="helix" evidence="3">
    <location>
        <begin position="222"/>
        <end position="256"/>
    </location>
</feature>
<feature type="helix" evidence="3">
    <location>
        <begin position="262"/>
        <end position="290"/>
    </location>
</feature>
<feature type="helix" evidence="3">
    <location>
        <begin position="299"/>
        <end position="315"/>
    </location>
</feature>
<feature type="helix" evidence="3">
    <location>
        <begin position="317"/>
        <end position="320"/>
    </location>
</feature>
<feature type="helix" evidence="3">
    <location>
        <begin position="321"/>
        <end position="326"/>
    </location>
</feature>
<feature type="turn" evidence="3">
    <location>
        <begin position="328"/>
        <end position="330"/>
    </location>
</feature>
<feature type="strand" evidence="3">
    <location>
        <begin position="335"/>
        <end position="337"/>
    </location>
</feature>
<feature type="helix" evidence="3">
    <location>
        <begin position="363"/>
        <end position="365"/>
    </location>
</feature>
<feature type="strand" evidence="3">
    <location>
        <begin position="367"/>
        <end position="371"/>
    </location>
</feature>
<feature type="helix" evidence="3">
    <location>
        <begin position="373"/>
        <end position="375"/>
    </location>
</feature>
<feature type="helix" evidence="3">
    <location>
        <begin position="388"/>
        <end position="390"/>
    </location>
</feature>
<feature type="strand" evidence="3">
    <location>
        <begin position="398"/>
        <end position="406"/>
    </location>
</feature>
<feature type="strand" evidence="3">
    <location>
        <begin position="415"/>
        <end position="423"/>
    </location>
</feature>
<feature type="strand" evidence="3">
    <location>
        <begin position="428"/>
        <end position="435"/>
    </location>
</feature>
<feature type="strand" evidence="3">
    <location>
        <begin position="442"/>
        <end position="452"/>
    </location>
</feature>
<feature type="strand" evidence="3">
    <location>
        <begin position="454"/>
        <end position="464"/>
    </location>
</feature>
<feature type="strand" evidence="3">
    <location>
        <begin position="466"/>
        <end position="468"/>
    </location>
</feature>
<feature type="strand" evidence="3">
    <location>
        <begin position="470"/>
        <end position="481"/>
    </location>
</feature>
<feature type="helix" evidence="3">
    <location>
        <begin position="489"/>
        <end position="495"/>
    </location>
</feature>
<feature type="strand" evidence="3">
    <location>
        <begin position="510"/>
        <end position="520"/>
    </location>
</feature>
<feature type="strand" evidence="3">
    <location>
        <begin position="531"/>
        <end position="538"/>
    </location>
</feature>
<feature type="strand" evidence="3">
    <location>
        <begin position="543"/>
        <end position="547"/>
    </location>
</feature>
<feature type="turn" evidence="3">
    <location>
        <begin position="552"/>
        <end position="554"/>
    </location>
</feature>
<feature type="strand" evidence="3">
    <location>
        <begin position="561"/>
        <end position="565"/>
    </location>
</feature>
<feature type="helix" evidence="3">
    <location>
        <begin position="571"/>
        <end position="573"/>
    </location>
</feature>
<feature type="strand" evidence="3">
    <location>
        <begin position="580"/>
        <end position="583"/>
    </location>
</feature>
<feature type="helix" evidence="3">
    <location>
        <begin position="584"/>
        <end position="586"/>
    </location>
</feature>
<feature type="strand" evidence="3">
    <location>
        <begin position="588"/>
        <end position="593"/>
    </location>
</feature>
<feature type="strand" evidence="3">
    <location>
        <begin position="598"/>
        <end position="605"/>
    </location>
</feature>
<feature type="strand" evidence="3">
    <location>
        <begin position="609"/>
        <end position="621"/>
    </location>
</feature>
<feature type="strand" evidence="3">
    <location>
        <begin position="623"/>
        <end position="629"/>
    </location>
</feature>
<feature type="strand" evidence="3">
    <location>
        <begin position="632"/>
        <end position="634"/>
    </location>
</feature>
<feature type="strand" evidence="3">
    <location>
        <begin position="636"/>
        <end position="642"/>
    </location>
</feature>
<feature type="strand" evidence="3">
    <location>
        <begin position="649"/>
        <end position="653"/>
    </location>
</feature>
<feature type="strand" evidence="3">
    <location>
        <begin position="655"/>
        <end position="669"/>
    </location>
</feature>
<feature type="strand" evidence="3">
    <location>
        <begin position="671"/>
        <end position="680"/>
    </location>
</feature>
<feature type="strand" evidence="3">
    <location>
        <begin position="682"/>
        <end position="684"/>
    </location>
</feature>
<feature type="strand" evidence="3">
    <location>
        <begin position="686"/>
        <end position="695"/>
    </location>
</feature>
<gene>
    <name type="primary">cry5Ba</name>
    <name type="synonym">cryVB(a)</name>
</gene>
<sequence length="1245" mass="139776">MATINELYPVPYNVLAHPIKEVDDPYSWSNLLKGIQEGWEEWGKTGQKKLFEDHLTIAWNLYKTGKLDYFALTKASISLIGFIPGAEAAVPFINMFVDFVWPKLFGANTEGKDQQLFNAIMDAVNKMVDNKFLSYNLSTLNKTIEGLQGNLGLFQNAIQVAICQGSTPERVNFDQNCTPCNPNQPCKDDLDRVASRFDTANSQFTQHLPEFKNPWSDENSTQEFKRTSVELTLPMYTTVATLHLLLYEGYIEFMTKWNFHNEQYLNNLKVELQQLIHSYSETVRTSFLQFLPTLNNRSKSSVNAYNRYVRNMTVNCLDIAATWPTFDTHNYHQGGKLDLTRIILSDTAGPIEEYTTGDKTSGPEHSNITPNNILDTPSPTYQHSFVSVDSIVYSRKELQQLDIATYSTNNSNNCHPYGLRLSYTDGSRYDYGDNQPDFTTSNNNYCHNSYTAPITLVNARHLYNAKGSLQNVESLVVSTVNGGSGSCICDAWINYLRPPQTSKNESRPDQKINVLYPITETVNKGTGGNLGVISAYVPMELVPENVIGDVNADTKLPLTQLKGFPFEKYGSEYNNRGISLVREWINGNNAVKLSNSQSVGIQITNQTKQKYEIRCRYASKGDNNVYFNVDLSENPFRNSISFGSTESSVVGVQGENGKYILKSITTVEIPAGSFYVHITNQGSSDLFLDRIEFVPKIQFQFCDNNNLHCDCNNPVDTDCTFCCVCTSLTDCDCNNPRGLDCTLCCQVENQLPSFVTLTDLQNITTQVNALVASSEHDTLATDVSDYEIEEVVLKVDALSGEVFGKEKKALRKLVNHTKRLSKARNLLIGGNFDNLDAWYRGRNVVNVSDHELFKSDHVLLPPPTLYSSYMFQKVEESKLKANTRYTVSGFIAHAEDLEIVVSRYGQEVKKVVQVPYGEAFPLTSRGAICCPPRSTSNGKPADPHFFSYSIDVGTLDVEANPGIELGLRIVERTGMARVSNLEIREDRPLKKNELRNVQRAARNWRTAYDQERAEVTALIQPVLNQINALYENEDWNGAIRSGVSYHDLEAIVLPTLPKLNHWFMSDMLGEQGSILAQFQEALDRAYTQLEESTILHNGHFTTDAANWTIEGDAHHAILEDGRRVLRLPDWSSSVSQTIEIENFDPDKEYQLVFHAQGEGTVSLQHGEEGEYVETHPHKSANFTTSHRQGVTFETNKVTVEITSEDGEFLVDHIALVEAPLPTDDQSSDGNTTSNTNSNTSMNNNQ</sequence>
<comment type="function">
    <text>Promotes colloidosmotic lysis by binding to the midgut epithelial cells of hymenopteran species.</text>
</comment>
<comment type="developmental stage">
    <text>The crystal protein is produced during sporulation and is accumulated both as an inclusion and as part of the spore coat.</text>
</comment>
<comment type="miscellaneous">
    <text>Toxic segment of the protein is located in the N-terminus.</text>
</comment>
<comment type="similarity">
    <text evidence="2">Belongs to the delta endotoxin family.</text>
</comment>
<organism>
    <name type="scientific">Bacillus thuringiensis</name>
    <dbReference type="NCBI Taxonomy" id="1428"/>
    <lineage>
        <taxon>Bacteria</taxon>
        <taxon>Bacillati</taxon>
        <taxon>Bacillota</taxon>
        <taxon>Bacilli</taxon>
        <taxon>Bacillales</taxon>
        <taxon>Bacillaceae</taxon>
        <taxon>Bacillus</taxon>
        <taxon>Bacillus cereus group</taxon>
    </lineage>
</organism>
<reference key="1">
    <citation type="patent" date="1997-01-21" number="US5596071">
        <title>Bacillus thuringiensis toxins active against hymenopteran pests.</title>
        <authorList>
            <person name="Payne J.M."/>
            <person name="Kennedy M.K."/>
            <person name="Randall J.B."/>
            <person name="Meier H."/>
            <person name="Uick H.J."/>
            <person name="Foncerrada L."/>
            <person name="Schnepf H.E."/>
            <person name="Schwab G.E."/>
            <person name="Fu J.M."/>
        </authorList>
    </citation>
    <scope>NUCLEOTIDE SEQUENCE [GENOMIC DNA]</scope>
    <scope>PROTEIN SEQUENCE OF 1-15</scope>
    <source>
        <strain>NRRL B-18765 / PS86Q3</strain>
    </source>
</reference>
<keyword id="KW-0002">3D-structure</keyword>
<keyword id="KW-0903">Direct protein sequencing</keyword>
<keyword id="KW-0749">Sporulation</keyword>
<keyword id="KW-0800">Toxin</keyword>
<keyword id="KW-0843">Virulence</keyword>
<protein>
    <recommendedName>
        <fullName>Pesticidal crystal protein Cry5Ba</fullName>
    </recommendedName>
    <alternativeName>
        <fullName>140 kDa crystal protein</fullName>
    </alternativeName>
    <alternativeName>
        <fullName>Crystaline entomocidal protoxin</fullName>
    </alternativeName>
    <alternativeName>
        <fullName>Insecticidal delta-endotoxin CryVB(a)</fullName>
    </alternativeName>
</protein>